<protein>
    <recommendedName>
        <fullName evidence="1">GTPase Era</fullName>
    </recommendedName>
</protein>
<sequence length="301" mass="33796">MSIDKSYCGFIAIVGRPNVGKSTLLNKLLGQKISITSRKAQTTRHRIVGIHTEGAYQAIYVDTPGLHMEEKRAINRLMNKAASSSIGDVELVIFVVEGTRWTPDDEMVLNKLRDGKAPVILAVNKVDNVQEKADLLPHLQFLASQMNFLDIVPISAETGLNVDTIAAIVRKHLPEATHHFPEDYITDRSQRFMASEIIREKLMRFLGAELPYSVTVEIERFVSNERGGYDINGLILVEREGQKKMVIGNKGAKIKTIGIEARKDMQEMFEAPVHLELWVKVKSGWADDERALRSLGYVDDL</sequence>
<keyword id="KW-0997">Cell inner membrane</keyword>
<keyword id="KW-1003">Cell membrane</keyword>
<keyword id="KW-0963">Cytoplasm</keyword>
<keyword id="KW-0342">GTP-binding</keyword>
<keyword id="KW-0472">Membrane</keyword>
<keyword id="KW-0547">Nucleotide-binding</keyword>
<keyword id="KW-1185">Reference proteome</keyword>
<keyword id="KW-0690">Ribosome biogenesis</keyword>
<keyword id="KW-0694">RNA-binding</keyword>
<keyword id="KW-0699">rRNA-binding</keyword>
<dbReference type="EMBL" id="CP001063">
    <property type="protein sequence ID" value="ACD09056.1"/>
    <property type="molecule type" value="Genomic_DNA"/>
</dbReference>
<dbReference type="RefSeq" id="WP_000020737.1">
    <property type="nucleotide sequence ID" value="NC_010658.1"/>
</dbReference>
<dbReference type="SMR" id="B2TXX9"/>
<dbReference type="STRING" id="344609.SbBS512_E2931"/>
<dbReference type="GeneID" id="93774525"/>
<dbReference type="KEGG" id="sbc:SbBS512_E2931"/>
<dbReference type="HOGENOM" id="CLU_038009_1_2_6"/>
<dbReference type="Proteomes" id="UP000001030">
    <property type="component" value="Chromosome"/>
</dbReference>
<dbReference type="GO" id="GO:0005829">
    <property type="term" value="C:cytosol"/>
    <property type="evidence" value="ECO:0007669"/>
    <property type="project" value="TreeGrafter"/>
</dbReference>
<dbReference type="GO" id="GO:0005886">
    <property type="term" value="C:plasma membrane"/>
    <property type="evidence" value="ECO:0007669"/>
    <property type="project" value="UniProtKB-SubCell"/>
</dbReference>
<dbReference type="GO" id="GO:0005525">
    <property type="term" value="F:GTP binding"/>
    <property type="evidence" value="ECO:0007669"/>
    <property type="project" value="UniProtKB-UniRule"/>
</dbReference>
<dbReference type="GO" id="GO:0003924">
    <property type="term" value="F:GTPase activity"/>
    <property type="evidence" value="ECO:0007669"/>
    <property type="project" value="UniProtKB-UniRule"/>
</dbReference>
<dbReference type="GO" id="GO:0043024">
    <property type="term" value="F:ribosomal small subunit binding"/>
    <property type="evidence" value="ECO:0007669"/>
    <property type="project" value="TreeGrafter"/>
</dbReference>
<dbReference type="GO" id="GO:0070181">
    <property type="term" value="F:small ribosomal subunit rRNA binding"/>
    <property type="evidence" value="ECO:0007669"/>
    <property type="project" value="UniProtKB-UniRule"/>
</dbReference>
<dbReference type="GO" id="GO:0000028">
    <property type="term" value="P:ribosomal small subunit assembly"/>
    <property type="evidence" value="ECO:0007669"/>
    <property type="project" value="TreeGrafter"/>
</dbReference>
<dbReference type="CDD" id="cd04163">
    <property type="entry name" value="Era"/>
    <property type="match status" value="1"/>
</dbReference>
<dbReference type="CDD" id="cd22534">
    <property type="entry name" value="KH-II_Era"/>
    <property type="match status" value="1"/>
</dbReference>
<dbReference type="FunFam" id="3.30.300.20:FF:000003">
    <property type="entry name" value="GTPase Era"/>
    <property type="match status" value="1"/>
</dbReference>
<dbReference type="FunFam" id="3.40.50.300:FF:000094">
    <property type="entry name" value="GTPase Era"/>
    <property type="match status" value="1"/>
</dbReference>
<dbReference type="Gene3D" id="3.30.300.20">
    <property type="match status" value="1"/>
</dbReference>
<dbReference type="Gene3D" id="3.40.50.300">
    <property type="entry name" value="P-loop containing nucleotide triphosphate hydrolases"/>
    <property type="match status" value="1"/>
</dbReference>
<dbReference type="HAMAP" id="MF_00367">
    <property type="entry name" value="GTPase_Era"/>
    <property type="match status" value="1"/>
</dbReference>
<dbReference type="InterPro" id="IPR030388">
    <property type="entry name" value="G_ERA_dom"/>
</dbReference>
<dbReference type="InterPro" id="IPR006073">
    <property type="entry name" value="GTP-bd"/>
</dbReference>
<dbReference type="InterPro" id="IPR005662">
    <property type="entry name" value="GTPase_Era-like"/>
</dbReference>
<dbReference type="InterPro" id="IPR015946">
    <property type="entry name" value="KH_dom-like_a/b"/>
</dbReference>
<dbReference type="InterPro" id="IPR004044">
    <property type="entry name" value="KH_dom_type_2"/>
</dbReference>
<dbReference type="InterPro" id="IPR009019">
    <property type="entry name" value="KH_sf_prok-type"/>
</dbReference>
<dbReference type="InterPro" id="IPR027417">
    <property type="entry name" value="P-loop_NTPase"/>
</dbReference>
<dbReference type="InterPro" id="IPR005225">
    <property type="entry name" value="Small_GTP-bd"/>
</dbReference>
<dbReference type="NCBIfam" id="TIGR00436">
    <property type="entry name" value="era"/>
    <property type="match status" value="1"/>
</dbReference>
<dbReference type="NCBIfam" id="NF000908">
    <property type="entry name" value="PRK00089.1"/>
    <property type="match status" value="1"/>
</dbReference>
<dbReference type="NCBIfam" id="TIGR00231">
    <property type="entry name" value="small_GTP"/>
    <property type="match status" value="1"/>
</dbReference>
<dbReference type="PANTHER" id="PTHR42698">
    <property type="entry name" value="GTPASE ERA"/>
    <property type="match status" value="1"/>
</dbReference>
<dbReference type="PANTHER" id="PTHR42698:SF1">
    <property type="entry name" value="GTPASE ERA, MITOCHONDRIAL"/>
    <property type="match status" value="1"/>
</dbReference>
<dbReference type="Pfam" id="PF07650">
    <property type="entry name" value="KH_2"/>
    <property type="match status" value="1"/>
</dbReference>
<dbReference type="Pfam" id="PF01926">
    <property type="entry name" value="MMR_HSR1"/>
    <property type="match status" value="1"/>
</dbReference>
<dbReference type="SUPFAM" id="SSF52540">
    <property type="entry name" value="P-loop containing nucleoside triphosphate hydrolases"/>
    <property type="match status" value="1"/>
</dbReference>
<dbReference type="SUPFAM" id="SSF54814">
    <property type="entry name" value="Prokaryotic type KH domain (KH-domain type II)"/>
    <property type="match status" value="1"/>
</dbReference>
<dbReference type="PROSITE" id="PS51713">
    <property type="entry name" value="G_ERA"/>
    <property type="match status" value="1"/>
</dbReference>
<dbReference type="PROSITE" id="PS50823">
    <property type="entry name" value="KH_TYPE_2"/>
    <property type="match status" value="1"/>
</dbReference>
<organism>
    <name type="scientific">Shigella boydii serotype 18 (strain CDC 3083-94 / BS512)</name>
    <dbReference type="NCBI Taxonomy" id="344609"/>
    <lineage>
        <taxon>Bacteria</taxon>
        <taxon>Pseudomonadati</taxon>
        <taxon>Pseudomonadota</taxon>
        <taxon>Gammaproteobacteria</taxon>
        <taxon>Enterobacterales</taxon>
        <taxon>Enterobacteriaceae</taxon>
        <taxon>Shigella</taxon>
    </lineage>
</organism>
<gene>
    <name evidence="1" type="primary">era</name>
    <name type="ordered locus">SbBS512_E2931</name>
</gene>
<feature type="chain" id="PRO_1000121355" description="GTPase Era">
    <location>
        <begin position="1"/>
        <end position="301"/>
    </location>
</feature>
<feature type="domain" description="Era-type G" evidence="2">
    <location>
        <begin position="7"/>
        <end position="175"/>
    </location>
</feature>
<feature type="domain" description="KH type-2" evidence="1">
    <location>
        <begin position="206"/>
        <end position="283"/>
    </location>
</feature>
<feature type="region of interest" description="G1" evidence="2">
    <location>
        <begin position="15"/>
        <end position="22"/>
    </location>
</feature>
<feature type="region of interest" description="G2" evidence="2">
    <location>
        <begin position="41"/>
        <end position="45"/>
    </location>
</feature>
<feature type="region of interest" description="G3" evidence="2">
    <location>
        <begin position="62"/>
        <end position="65"/>
    </location>
</feature>
<feature type="region of interest" description="G4" evidence="2">
    <location>
        <begin position="124"/>
        <end position="127"/>
    </location>
</feature>
<feature type="region of interest" description="G5" evidence="2">
    <location>
        <begin position="154"/>
        <end position="156"/>
    </location>
</feature>
<feature type="binding site" evidence="1">
    <location>
        <begin position="15"/>
        <end position="22"/>
    </location>
    <ligand>
        <name>GTP</name>
        <dbReference type="ChEBI" id="CHEBI:37565"/>
    </ligand>
</feature>
<feature type="binding site" evidence="1">
    <location>
        <begin position="62"/>
        <end position="66"/>
    </location>
    <ligand>
        <name>GTP</name>
        <dbReference type="ChEBI" id="CHEBI:37565"/>
    </ligand>
</feature>
<feature type="binding site" evidence="1">
    <location>
        <begin position="124"/>
        <end position="127"/>
    </location>
    <ligand>
        <name>GTP</name>
        <dbReference type="ChEBI" id="CHEBI:37565"/>
    </ligand>
</feature>
<comment type="function">
    <text evidence="1">An essential GTPase that binds both GDP and GTP, with rapid nucleotide exchange. Plays a role in 16S rRNA processing and 30S ribosomal subunit biogenesis and possibly also in cell cycle regulation and energy metabolism.</text>
</comment>
<comment type="subunit">
    <text evidence="1">Monomer.</text>
</comment>
<comment type="subcellular location">
    <subcellularLocation>
        <location>Cytoplasm</location>
    </subcellularLocation>
    <subcellularLocation>
        <location evidence="1">Cell inner membrane</location>
        <topology evidence="1">Peripheral membrane protein</topology>
    </subcellularLocation>
</comment>
<comment type="similarity">
    <text evidence="1 2">Belongs to the TRAFAC class TrmE-Era-EngA-EngB-Septin-like GTPase superfamily. Era GTPase family.</text>
</comment>
<evidence type="ECO:0000255" key="1">
    <source>
        <dbReference type="HAMAP-Rule" id="MF_00367"/>
    </source>
</evidence>
<evidence type="ECO:0000255" key="2">
    <source>
        <dbReference type="PROSITE-ProRule" id="PRU01050"/>
    </source>
</evidence>
<accession>B2TXX9</accession>
<proteinExistence type="inferred from homology"/>
<name>ERA_SHIB3</name>
<reference key="1">
    <citation type="submission" date="2008-05" db="EMBL/GenBank/DDBJ databases">
        <title>Complete sequence of Shigella boydii serotype 18 strain BS512.</title>
        <authorList>
            <person name="Rasko D.A."/>
            <person name="Rosovitz M."/>
            <person name="Maurelli A.T."/>
            <person name="Myers G."/>
            <person name="Seshadri R."/>
            <person name="Cer R."/>
            <person name="Jiang L."/>
            <person name="Ravel J."/>
            <person name="Sebastian Y."/>
        </authorList>
    </citation>
    <scope>NUCLEOTIDE SEQUENCE [LARGE SCALE GENOMIC DNA]</scope>
    <source>
        <strain>CDC 3083-94 / BS512</strain>
    </source>
</reference>